<dbReference type="EMBL" id="Z81211">
    <property type="protein sequence ID" value="CAB03568.1"/>
    <property type="molecule type" value="mRNA"/>
</dbReference>
<dbReference type="EMBL" id="DQ629139">
    <property type="protein sequence ID" value="ABK55624.1"/>
    <property type="molecule type" value="mRNA"/>
</dbReference>
<dbReference type="RefSeq" id="NP_001090933.1">
    <property type="nucleotide sequence ID" value="NM_001097464.1"/>
</dbReference>
<dbReference type="PDB" id="6J54">
    <property type="method" value="EM"/>
    <property type="resolution" value="3.94 A"/>
    <property type="chains" value="f=2-88"/>
</dbReference>
<dbReference type="PDB" id="6J5A">
    <property type="method" value="EM"/>
    <property type="resolution" value="4.35 A"/>
    <property type="chains" value="f=2-88"/>
</dbReference>
<dbReference type="PDB" id="6J5I">
    <property type="method" value="EM"/>
    <property type="resolution" value="3.34 A"/>
    <property type="chains" value="f=2-88"/>
</dbReference>
<dbReference type="PDB" id="6J5J">
    <property type="method" value="EM"/>
    <property type="resolution" value="3.45 A"/>
    <property type="chains" value="f=2-88"/>
</dbReference>
<dbReference type="PDB" id="6J5K">
    <property type="method" value="EM"/>
    <property type="resolution" value="6.20 A"/>
    <property type="chains" value="Af/Bf/Cf/f=2-88"/>
</dbReference>
<dbReference type="PDB" id="6ZMR">
    <property type="method" value="EM"/>
    <property type="resolution" value="3.94 A"/>
    <property type="chains" value="f=2-88"/>
</dbReference>
<dbReference type="PDB" id="6ZNA">
    <property type="method" value="EM"/>
    <property type="resolution" value="6.20 A"/>
    <property type="chains" value="Af/Bf/Cf/f=2-88"/>
</dbReference>
<dbReference type="PDBsum" id="6J54"/>
<dbReference type="PDBsum" id="6J5A"/>
<dbReference type="PDBsum" id="6J5I"/>
<dbReference type="PDBsum" id="6J5J"/>
<dbReference type="PDBsum" id="6J5K"/>
<dbReference type="PDBsum" id="6ZMR"/>
<dbReference type="PDBsum" id="6ZNA"/>
<dbReference type="SMR" id="Q95339"/>
<dbReference type="FunCoup" id="Q95339">
    <property type="interactions" value="542"/>
</dbReference>
<dbReference type="IntAct" id="Q95339">
    <property type="interactions" value="1"/>
</dbReference>
<dbReference type="STRING" id="9823.ENSSSCP00000008142"/>
<dbReference type="PaxDb" id="9823-ENSSSCP00000008135"/>
<dbReference type="PeptideAtlas" id="Q95339"/>
<dbReference type="Ensembl" id="ENSSSCT00000008361.5">
    <property type="protein sequence ID" value="ENSSSCP00000008142.5"/>
    <property type="gene ID" value="ENSSSCG00000034019.3"/>
</dbReference>
<dbReference type="Ensembl" id="ENSSSCT00070029288.1">
    <property type="protein sequence ID" value="ENSSSCP00070024407.1"/>
    <property type="gene ID" value="ENSSSCG00070014902.1"/>
</dbReference>
<dbReference type="Ensembl" id="ENSSSCT00090024488">
    <property type="protein sequence ID" value="ENSSSCP00090015171"/>
    <property type="gene ID" value="ENSSSCG00090013963"/>
</dbReference>
<dbReference type="Ensembl" id="ENSSSCT00105026556">
    <property type="protein sequence ID" value="ENSSSCP00105018836"/>
    <property type="gene ID" value="ENSSSCG00105013575"/>
</dbReference>
<dbReference type="Ensembl" id="ENSSSCT00110057976">
    <property type="protein sequence ID" value="ENSSSCP00110040393"/>
    <property type="gene ID" value="ENSSSCG00110030272"/>
</dbReference>
<dbReference type="Ensembl" id="ENSSSCT00115034449">
    <property type="protein sequence ID" value="ENSSSCP00115032713"/>
    <property type="gene ID" value="ENSSSCG00115019447"/>
</dbReference>
<dbReference type="Ensembl" id="ENSSSCT00130056478">
    <property type="protein sequence ID" value="ENSSSCP00130040458"/>
    <property type="gene ID" value="ENSSSCG00130028915"/>
</dbReference>
<dbReference type="GeneID" id="100037979"/>
<dbReference type="KEGG" id="ssc:100037979"/>
<dbReference type="CTD" id="9551"/>
<dbReference type="VGNC" id="VGNC:97036">
    <property type="gene designation" value="ATP5MF"/>
</dbReference>
<dbReference type="eggNOG" id="KOG4092">
    <property type="taxonomic scope" value="Eukaryota"/>
</dbReference>
<dbReference type="GeneTree" id="ENSGT00510000046986"/>
<dbReference type="InParanoid" id="Q95339"/>
<dbReference type="OMA" id="HKYVQPK"/>
<dbReference type="OrthoDB" id="8921675at2759"/>
<dbReference type="Reactome" id="R-SSC-163210">
    <property type="pathway name" value="Formation of ATP by chemiosmotic coupling"/>
</dbReference>
<dbReference type="Reactome" id="R-SSC-8949613">
    <property type="pathway name" value="Cristae formation"/>
</dbReference>
<dbReference type="Proteomes" id="UP000008227">
    <property type="component" value="Chromosome 3"/>
</dbReference>
<dbReference type="Proteomes" id="UP000314985">
    <property type="component" value="Chromosome 3"/>
</dbReference>
<dbReference type="Proteomes" id="UP000694570">
    <property type="component" value="Unplaced"/>
</dbReference>
<dbReference type="Proteomes" id="UP000694571">
    <property type="component" value="Unplaced"/>
</dbReference>
<dbReference type="Proteomes" id="UP000694720">
    <property type="component" value="Unplaced"/>
</dbReference>
<dbReference type="Proteomes" id="UP000694722">
    <property type="component" value="Unplaced"/>
</dbReference>
<dbReference type="Proteomes" id="UP000694723">
    <property type="component" value="Unplaced"/>
</dbReference>
<dbReference type="Proteomes" id="UP000694724">
    <property type="component" value="Unplaced"/>
</dbReference>
<dbReference type="Proteomes" id="UP000694725">
    <property type="component" value="Unplaced"/>
</dbReference>
<dbReference type="Proteomes" id="UP000694726">
    <property type="component" value="Unplaced"/>
</dbReference>
<dbReference type="Proteomes" id="UP000694727">
    <property type="component" value="Unplaced"/>
</dbReference>
<dbReference type="Proteomes" id="UP000694728">
    <property type="component" value="Unplaced"/>
</dbReference>
<dbReference type="GO" id="GO:0005743">
    <property type="term" value="C:mitochondrial inner membrane"/>
    <property type="evidence" value="ECO:0007669"/>
    <property type="project" value="UniProtKB-SubCell"/>
</dbReference>
<dbReference type="GO" id="GO:0045259">
    <property type="term" value="C:proton-transporting ATP synthase complex"/>
    <property type="evidence" value="ECO:0000250"/>
    <property type="project" value="UniProtKB"/>
</dbReference>
<dbReference type="GO" id="GO:0006754">
    <property type="term" value="P:ATP biosynthetic process"/>
    <property type="evidence" value="ECO:0007669"/>
    <property type="project" value="UniProtKB-KW"/>
</dbReference>
<dbReference type="GO" id="GO:1902600">
    <property type="term" value="P:proton transmembrane transport"/>
    <property type="evidence" value="ECO:0007669"/>
    <property type="project" value="UniProtKB-KW"/>
</dbReference>
<dbReference type="InterPro" id="IPR019344">
    <property type="entry name" value="F1F0-ATPsyn_F_prd"/>
</dbReference>
<dbReference type="PANTHER" id="PTHR13080">
    <property type="entry name" value="ATP SYNTHASE F CHAIN, MITOCHONDRIAL-RELATED"/>
    <property type="match status" value="1"/>
</dbReference>
<dbReference type="PANTHER" id="PTHR13080:SF16">
    <property type="entry name" value="ATP SYNTHASE SUBUNIT F, MITOCHONDRIAL"/>
    <property type="match status" value="1"/>
</dbReference>
<dbReference type="Pfam" id="PF10206">
    <property type="entry name" value="WRW"/>
    <property type="match status" value="1"/>
</dbReference>
<gene>
    <name evidence="3" type="primary">ATP5MF</name>
    <name type="synonym">ATP5J2</name>
</gene>
<sequence length="88" mass="10311">MASVVPLKDRRLLEVKLGELPSWILMRDFTPSGIAGAFQRGYYRYYNKYVNVKKGSVAGLSMVLAAYVVFNYCRSYKELKHERLRKYH</sequence>
<comment type="function">
    <text evidence="2 3">Subunit f, of the mitochondrial membrane ATP synthase complex (F(1)F(0) ATP synthase or Complex V) that produces ATP from ADP in the presence of a proton gradient across the membrane which is generated by electron transport complexes of the respiratory chain. ATP synthase complex consist of a soluble F(1) head domain - the catalytic core - and a membrane F(1) domain - the membrane proton channel. These two domains are linked by a central stalk rotating inside the F(1) region and a stationary peripheral stalk. During catalysis, ATP synthesis in the catalytic domain of F(1) is coupled via a rotary mechanism of the central stalk subunits to proton translocation (By similarity). In vivo, can only synthesize ATP although its ATP hydrolase activity can be activated artificially in vitro (By similarity). Part of the complex F(0) domain (By similarity).</text>
</comment>
<comment type="subunit">
    <text evidence="3">Component of the ATP synthase complex composed at least of ATP5F1A/subunit alpha, ATP5F1B/subunit beta, ATP5MC1/subunit c (homooctomer), MT-ATP6/subunit a, MT-ATP8/subunit 8, ATP5ME/subunit e, ATP5MF/subunit f, ATP5MG/subunit g, ATP5MK/subunit k, ATP5MJ/subunit j, ATP5F1C/subunit gamma, ATP5F1D/subunit delta, ATP5F1E/subunit epsilon, ATP5PF/subunit F6, ATP5PB/subunit b, ATP5PD/subunit d, ATP5PO/subunit OSCP. ATP synthase complex consists of a soluble F(1) head domain (subunits alpha(3) and beta(3)) - the catalytic core - and a membrane F(0) domain - the membrane proton channel (subunits c, a, 8, e, f, g, k and j). These two domains are linked by a central stalk (subunits gamma, delta, and epsilon) rotating inside the F1 region and a stationary peripheral stalk (subunits F6, b, d, and OSCP).</text>
</comment>
<comment type="subcellular location">
    <subcellularLocation>
        <location>Mitochondrion</location>
    </subcellularLocation>
    <subcellularLocation>
        <location evidence="5">Mitochondrion inner membrane</location>
        <topology evidence="5">Single-pass membrane protein</topology>
    </subcellularLocation>
</comment>
<comment type="similarity">
    <text evidence="5">Belongs to the ATPase F chain family.</text>
</comment>
<keyword id="KW-0002">3D-structure</keyword>
<keyword id="KW-0007">Acetylation</keyword>
<keyword id="KW-0066">ATP synthesis</keyword>
<keyword id="KW-0138">CF(0)</keyword>
<keyword id="KW-0375">Hydrogen ion transport</keyword>
<keyword id="KW-0406">Ion transport</keyword>
<keyword id="KW-0472">Membrane</keyword>
<keyword id="KW-0496">Mitochondrion</keyword>
<keyword id="KW-0999">Mitochondrion inner membrane</keyword>
<keyword id="KW-0597">Phosphoprotein</keyword>
<keyword id="KW-1185">Reference proteome</keyword>
<keyword id="KW-0812">Transmembrane</keyword>
<keyword id="KW-1133">Transmembrane helix</keyword>
<keyword id="KW-0813">Transport</keyword>
<organism>
    <name type="scientific">Sus scrofa</name>
    <name type="common">Pig</name>
    <dbReference type="NCBI Taxonomy" id="9823"/>
    <lineage>
        <taxon>Eukaryota</taxon>
        <taxon>Metazoa</taxon>
        <taxon>Chordata</taxon>
        <taxon>Craniata</taxon>
        <taxon>Vertebrata</taxon>
        <taxon>Euteleostomi</taxon>
        <taxon>Mammalia</taxon>
        <taxon>Eutheria</taxon>
        <taxon>Laurasiatheria</taxon>
        <taxon>Artiodactyla</taxon>
        <taxon>Suina</taxon>
        <taxon>Suidae</taxon>
        <taxon>Sus</taxon>
    </lineage>
</organism>
<feature type="initiator methionine" description="Removed" evidence="3">
    <location>
        <position position="1"/>
    </location>
</feature>
<feature type="chain" id="PRO_0000194826" description="ATP synthase F(0) complex subunit f, mitochondrial">
    <location>
        <begin position="2"/>
        <end position="88"/>
    </location>
</feature>
<feature type="transmembrane region" description="Helical" evidence="3">
    <location>
        <begin position="62"/>
        <end position="79"/>
    </location>
</feature>
<feature type="modified residue" description="N-acetylalanine" evidence="3">
    <location>
        <position position="2"/>
    </location>
</feature>
<feature type="modified residue" description="Phosphoserine" evidence="1">
    <location>
        <position position="3"/>
    </location>
</feature>
<feature type="modified residue" description="N6-acetyllysine" evidence="4">
    <location>
        <position position="16"/>
    </location>
</feature>
<feature type="sequence conflict" description="In Ref. 2; ABK55624." evidence="5" ref="2">
    <original>A</original>
    <variation>T</variation>
    <location>
        <position position="2"/>
    </location>
</feature>
<feature type="helix" evidence="6">
    <location>
        <begin position="4"/>
        <end position="17"/>
    </location>
</feature>
<feature type="strand" evidence="7">
    <location>
        <begin position="23"/>
        <end position="26"/>
    </location>
</feature>
<feature type="helix" evidence="6">
    <location>
        <begin position="32"/>
        <end position="35"/>
    </location>
</feature>
<feature type="helix" evidence="6">
    <location>
        <begin position="38"/>
        <end position="41"/>
    </location>
</feature>
<feature type="helix" evidence="6">
    <location>
        <begin position="42"/>
        <end position="44"/>
    </location>
</feature>
<feature type="turn" evidence="6">
    <location>
        <begin position="52"/>
        <end position="54"/>
    </location>
</feature>
<feature type="helix" evidence="6">
    <location>
        <begin position="57"/>
        <end position="60"/>
    </location>
</feature>
<feature type="helix" evidence="6">
    <location>
        <begin position="63"/>
        <end position="75"/>
    </location>
</feature>
<feature type="turn" evidence="6">
    <location>
        <begin position="76"/>
        <end position="78"/>
    </location>
</feature>
<accession>Q95339</accession>
<accession>A1XQR8</accession>
<proteinExistence type="evidence at protein level"/>
<name>ATPK_PIG</name>
<evidence type="ECO:0000250" key="1">
    <source>
        <dbReference type="UniProtKB" id="D3ZAF6"/>
    </source>
</evidence>
<evidence type="ECO:0000250" key="2">
    <source>
        <dbReference type="UniProtKB" id="P19483"/>
    </source>
</evidence>
<evidence type="ECO:0000250" key="3">
    <source>
        <dbReference type="UniProtKB" id="P56134"/>
    </source>
</evidence>
<evidence type="ECO:0000250" key="4">
    <source>
        <dbReference type="UniProtKB" id="P56135"/>
    </source>
</evidence>
<evidence type="ECO:0000305" key="5"/>
<evidence type="ECO:0007829" key="6">
    <source>
        <dbReference type="PDB" id="6J5I"/>
    </source>
</evidence>
<evidence type="ECO:0007829" key="7">
    <source>
        <dbReference type="PDB" id="6J5J"/>
    </source>
</evidence>
<reference key="1">
    <citation type="submission" date="1996-10" db="EMBL/GenBank/DDBJ databases">
        <title>Evaluation and characterization of a porcine small intestine cDNA library.</title>
        <authorList>
            <person name="Winteroe A.K."/>
            <person name="Fredholm M."/>
            <person name="Davies W."/>
        </authorList>
    </citation>
    <scope>NUCLEOTIDE SEQUENCE [LARGE SCALE MRNA]</scope>
    <source>
        <tissue>Small intestine</tissue>
    </source>
</reference>
<reference key="2">
    <citation type="submission" date="2006-05" db="EMBL/GenBank/DDBJ databases">
        <title>Generation and analysis of cDNA sequences derived from a porcine skeletal muscle library.</title>
        <authorList>
            <person name="Cai G."/>
            <person name="Chen Y."/>
            <person name="Wang C."/>
            <person name="Li J."/>
            <person name="Peng G."/>
            <person name="Zhang H."/>
        </authorList>
    </citation>
    <scope>NUCLEOTIDE SEQUENCE [MRNA]</scope>
    <source>
        <tissue>Longissimus dorsi muscle</tissue>
    </source>
</reference>
<protein>
    <recommendedName>
        <fullName evidence="3">ATP synthase F(0) complex subunit f, mitochondrial</fullName>
    </recommendedName>
    <alternativeName>
        <fullName evidence="5">ATP synthase membrane subunit f</fullName>
    </alternativeName>
</protein>